<proteinExistence type="evidence at protein level"/>
<dbReference type="EMBL" id="AB126075">
    <property type="protein sequence ID" value="BAD20202.1"/>
    <property type="molecule type" value="mRNA"/>
</dbReference>
<dbReference type="EMBL" id="BC130399">
    <property type="protein sequence ID" value="AAI30400.1"/>
    <property type="molecule type" value="mRNA"/>
</dbReference>
<dbReference type="EMBL" id="BC133035">
    <property type="protein sequence ID" value="AAI33036.1"/>
    <property type="molecule type" value="mRNA"/>
</dbReference>
<dbReference type="CCDS" id="CCDS31332.1"/>
<dbReference type="RefSeq" id="NP_001012416.1">
    <property type="nucleotide sequence ID" value="NM_001012416.1"/>
</dbReference>
<dbReference type="BioGRID" id="136221">
    <property type="interactions" value="93"/>
</dbReference>
<dbReference type="FunCoup" id="Q6L8G9">
    <property type="interactions" value="64"/>
</dbReference>
<dbReference type="IntAct" id="Q6L8G9">
    <property type="interactions" value="82"/>
</dbReference>
<dbReference type="STRING" id="9606.ENSP00000371595"/>
<dbReference type="iPTMnet" id="Q6L8G9"/>
<dbReference type="PhosphoSitePlus" id="Q6L8G9"/>
<dbReference type="BioMuta" id="KRTAP5-6"/>
<dbReference type="PaxDb" id="9606-ENSP00000371595"/>
<dbReference type="PeptideAtlas" id="Q6L8G9"/>
<dbReference type="DNASU" id="440023"/>
<dbReference type="Ensembl" id="ENST00000382160.1">
    <property type="protein sequence ID" value="ENSP00000371595.1"/>
    <property type="gene ID" value="ENSG00000205864.1"/>
</dbReference>
<dbReference type="Ensembl" id="ENST00000611731.1">
    <property type="protein sequence ID" value="ENSP00000479098.1"/>
    <property type="gene ID" value="ENSG00000277389.1"/>
</dbReference>
<dbReference type="GeneID" id="440023"/>
<dbReference type="KEGG" id="hsa:440023"/>
<dbReference type="MANE-Select" id="ENST00000382160.1">
    <property type="protein sequence ID" value="ENSP00000371595.1"/>
    <property type="RefSeq nucleotide sequence ID" value="NM_001012416.1"/>
    <property type="RefSeq protein sequence ID" value="NP_001012416.1"/>
</dbReference>
<dbReference type="UCSC" id="uc001lua.3">
    <property type="organism name" value="human"/>
</dbReference>
<dbReference type="AGR" id="HGNC:23600"/>
<dbReference type="CTD" id="440023"/>
<dbReference type="GeneCards" id="KRTAP5-6"/>
<dbReference type="HGNC" id="HGNC:23600">
    <property type="gene designation" value="KRTAP5-6"/>
</dbReference>
<dbReference type="HPA" id="ENSG00000205864">
    <property type="expression patterns" value="Group enriched (liver, skin)"/>
</dbReference>
<dbReference type="neXtProt" id="NX_Q6L8G9"/>
<dbReference type="OpenTargets" id="ENSG00000205864"/>
<dbReference type="PharmGKB" id="PA134922071"/>
<dbReference type="VEuPathDB" id="HostDB:ENSG00000205864"/>
<dbReference type="eggNOG" id="ENOG502TEXH">
    <property type="taxonomic scope" value="Eukaryota"/>
</dbReference>
<dbReference type="GeneTree" id="ENSGT00940000164776"/>
<dbReference type="HOGENOM" id="CLU_097966_1_0_1"/>
<dbReference type="InParanoid" id="Q6L8G9"/>
<dbReference type="OMA" id="CHLACGC"/>
<dbReference type="PAN-GO" id="Q6L8G9">
    <property type="GO annotations" value="0 GO annotations based on evolutionary models"/>
</dbReference>
<dbReference type="PathwayCommons" id="Q6L8G9"/>
<dbReference type="Reactome" id="R-HSA-6805567">
    <property type="pathway name" value="Keratinization"/>
</dbReference>
<dbReference type="SignaLink" id="Q6L8G9"/>
<dbReference type="BioGRID-ORCS" id="440023">
    <property type="hits" value="319 hits in 1045 CRISPR screens"/>
</dbReference>
<dbReference type="GenomeRNAi" id="440023"/>
<dbReference type="Pharos" id="Q6L8G9">
    <property type="development level" value="Tdark"/>
</dbReference>
<dbReference type="PRO" id="PR:Q6L8G9"/>
<dbReference type="Proteomes" id="UP000005640">
    <property type="component" value="Chromosome 11"/>
</dbReference>
<dbReference type="RNAct" id="Q6L8G9">
    <property type="molecule type" value="protein"/>
</dbReference>
<dbReference type="Bgee" id="ENSG00000205864">
    <property type="expression patterns" value="Expressed in right lobe of liver and 19 other cell types or tissues"/>
</dbReference>
<dbReference type="GO" id="GO:0005829">
    <property type="term" value="C:cytosol"/>
    <property type="evidence" value="ECO:0000304"/>
    <property type="project" value="Reactome"/>
</dbReference>
<dbReference type="GO" id="GO:0005882">
    <property type="term" value="C:intermediate filament"/>
    <property type="evidence" value="ECO:0007669"/>
    <property type="project" value="UniProtKB-KW"/>
</dbReference>
<keyword id="KW-0416">Keratin</keyword>
<keyword id="KW-1267">Proteomics identification</keyword>
<keyword id="KW-1185">Reference proteome</keyword>
<keyword id="KW-0677">Repeat</keyword>
<reference key="1">
    <citation type="journal article" date="2004" name="Biochem. Biophys. Res. Commun.">
        <title>Identification of two novel clusters of ultrahigh-sulfur keratin-associated protein genes on human chromosome 11.</title>
        <authorList>
            <person name="Yahagi S."/>
            <person name="Shibuya K."/>
            <person name="Obayashi I."/>
            <person name="Masaki H."/>
            <person name="Kurata Y."/>
            <person name="Kudoh J."/>
            <person name="Shimizu N."/>
        </authorList>
    </citation>
    <scope>NUCLEOTIDE SEQUENCE [MRNA]</scope>
    <scope>TISSUE SPECIFICITY</scope>
    <source>
        <tissue>Hair root</tissue>
    </source>
</reference>
<reference key="2">
    <citation type="journal article" date="2004" name="Genome Res.">
        <title>The status, quality, and expansion of the NIH full-length cDNA project: the Mammalian Gene Collection (MGC).</title>
        <authorList>
            <consortium name="The MGC Project Team"/>
        </authorList>
    </citation>
    <scope>NUCLEOTIDE SEQUENCE [LARGE SCALE MRNA]</scope>
</reference>
<name>KRA56_HUMAN</name>
<comment type="function">
    <text>In the hair cortex, hair keratin intermediate filaments are embedded in an interfilamentous matrix, consisting of hair keratin-associated protein (KRTAP), which are essential for the formation of a rigid and resistant hair shaft through their extensive disulfide bond cross-linking with abundant cysteine residues of hair keratins. The matrix proteins include the high-sulfur and high-glycine-tyrosine keratins.</text>
</comment>
<comment type="subunit">
    <text>Interacts with hair keratins.</text>
</comment>
<comment type="interaction">
    <interactant intactId="EBI-10250562">
        <id>Q6L8G9</id>
    </interactant>
    <interactant intactId="EBI-12006944">
        <id>O43184-4</id>
        <label>ADAM12</label>
    </interactant>
    <organismsDiffer>false</organismsDiffer>
    <experiments>3</experiments>
</comment>
<comment type="interaction">
    <interactant intactId="EBI-10250562">
        <id>Q6L8G9</id>
    </interactant>
    <interactant intactId="EBI-10173507">
        <id>Q6UY14-3</id>
        <label>ADAMTSL4</label>
    </interactant>
    <organismsDiffer>false</organismsDiffer>
    <experiments>3</experiments>
</comment>
<comment type="interaction">
    <interactant intactId="EBI-10250562">
        <id>Q6L8G9</id>
    </interactant>
    <interactant intactId="EBI-7317823">
        <id>Q6P5X5</id>
        <label>C22orf39</label>
    </interactant>
    <organismsDiffer>false</organismsDiffer>
    <experiments>3</experiments>
</comment>
<comment type="interaction">
    <interactant intactId="EBI-10250562">
        <id>Q6L8G9</id>
    </interactant>
    <interactant intactId="EBI-744545">
        <id>Q8NEC5</id>
        <label>CATSPER1</label>
    </interactant>
    <organismsDiffer>false</organismsDiffer>
    <experiments>6</experiments>
</comment>
<comment type="interaction">
    <interactant intactId="EBI-10250562">
        <id>Q6L8G9</id>
    </interactant>
    <interactant intactId="EBI-3904822">
        <id>P48745</id>
        <label>CCN3</label>
    </interactant>
    <organismsDiffer>false</organismsDiffer>
    <experiments>3</experiments>
</comment>
<comment type="interaction">
    <interactant intactId="EBI-10250562">
        <id>Q6L8G9</id>
    </interactant>
    <interactant intactId="EBI-747133">
        <id>P27658</id>
        <label>COL8A1</label>
    </interactant>
    <organismsDiffer>false</organismsDiffer>
    <experiments>3</experiments>
</comment>
<comment type="interaction">
    <interactant intactId="EBI-10250562">
        <id>Q6L8G9</id>
    </interactant>
    <interactant intactId="EBI-713677">
        <id>Q9UGL9</id>
        <label>CRCT1</label>
    </interactant>
    <organismsDiffer>false</organismsDiffer>
    <experiments>6</experiments>
</comment>
<comment type="interaction">
    <interactant intactId="EBI-10250562">
        <id>Q6L8G9</id>
    </interactant>
    <interactant intactId="EBI-10192698">
        <id>Q02930-3</id>
        <label>CREB5</label>
    </interactant>
    <organismsDiffer>false</organismsDiffer>
    <experiments>6</experiments>
</comment>
<comment type="interaction">
    <interactant intactId="EBI-10250562">
        <id>Q6L8G9</id>
    </interactant>
    <interactant intactId="EBI-3867333">
        <id>A8MQ03</id>
        <label>CYSRT1</label>
    </interactant>
    <organismsDiffer>false</organismsDiffer>
    <experiments>6</experiments>
</comment>
<comment type="interaction">
    <interactant intactId="EBI-10250562">
        <id>Q6L8G9</id>
    </interactant>
    <interactant intactId="EBI-742054">
        <id>Q96D03</id>
        <label>DDIT4L</label>
    </interactant>
    <organismsDiffer>false</organismsDiffer>
    <experiments>3</experiments>
</comment>
<comment type="interaction">
    <interactant intactId="EBI-10250562">
        <id>Q6L8G9</id>
    </interactant>
    <interactant intactId="EBI-374781">
        <id>O76003</id>
        <label>GLRX3</label>
    </interactant>
    <organismsDiffer>false</organismsDiffer>
    <experiments>7</experiments>
</comment>
<comment type="interaction">
    <interactant intactId="EBI-10250562">
        <id>Q6L8G9</id>
    </interactant>
    <interactant intactId="EBI-11978177">
        <id>Q96NT3-2</id>
        <label>GUCD1</label>
    </interactant>
    <organismsDiffer>false</organismsDiffer>
    <experiments>3</experiments>
</comment>
<comment type="interaction">
    <interactant intactId="EBI-10250562">
        <id>Q6L8G9</id>
    </interactant>
    <interactant intactId="EBI-740785">
        <id>P49639</id>
        <label>HOXA1</label>
    </interactant>
    <organismsDiffer>false</organismsDiffer>
    <experiments>9</experiments>
</comment>
<comment type="interaction">
    <interactant intactId="EBI-10250562">
        <id>Q6L8G9</id>
    </interactant>
    <interactant intactId="EBI-6509505">
        <id>Q0VD86</id>
        <label>INCA1</label>
    </interactant>
    <organismsDiffer>false</organismsDiffer>
    <experiments>3</experiments>
</comment>
<comment type="interaction">
    <interactant intactId="EBI-10250562">
        <id>Q6L8G9</id>
    </interactant>
    <interactant intactId="EBI-948001">
        <id>Q15323</id>
        <label>KRT31</label>
    </interactant>
    <organismsDiffer>false</organismsDiffer>
    <experiments>3</experiments>
</comment>
<comment type="interaction">
    <interactant intactId="EBI-10250562">
        <id>Q6L8G9</id>
    </interactant>
    <interactant intactId="EBI-11959885">
        <id>Q07627</id>
        <label>KRTAP1-1</label>
    </interactant>
    <organismsDiffer>false</organismsDiffer>
    <experiments>3</experiments>
</comment>
<comment type="interaction">
    <interactant intactId="EBI-10250562">
        <id>Q6L8G9</id>
    </interactant>
    <interactant intactId="EBI-11749135">
        <id>Q8IUG1</id>
        <label>KRTAP1-3</label>
    </interactant>
    <organismsDiffer>false</organismsDiffer>
    <experiments>3</experiments>
</comment>
<comment type="interaction">
    <interactant intactId="EBI-10250562">
        <id>Q6L8G9</id>
    </interactant>
    <interactant intactId="EBI-11741292">
        <id>Q9BYS1</id>
        <label>KRTAP1-5</label>
    </interactant>
    <organismsDiffer>false</organismsDiffer>
    <experiments>3</experiments>
</comment>
<comment type="interaction">
    <interactant intactId="EBI-10250562">
        <id>Q6L8G9</id>
    </interactant>
    <interactant intactId="EBI-10172150">
        <id>P60370</id>
        <label>KRTAP10-5</label>
    </interactant>
    <organismsDiffer>false</organismsDiffer>
    <experiments>3</experiments>
</comment>
<comment type="interaction">
    <interactant intactId="EBI-10250562">
        <id>Q6L8G9</id>
    </interactant>
    <interactant intactId="EBI-10172290">
        <id>P60409</id>
        <label>KRTAP10-7</label>
    </interactant>
    <organismsDiffer>false</organismsDiffer>
    <experiments>6</experiments>
</comment>
<comment type="interaction">
    <interactant intactId="EBI-10250562">
        <id>Q6L8G9</id>
    </interactant>
    <interactant intactId="EBI-10171774">
        <id>P60410</id>
        <label>KRTAP10-8</label>
    </interactant>
    <organismsDiffer>false</organismsDiffer>
    <experiments>8</experiments>
</comment>
<comment type="interaction">
    <interactant intactId="EBI-10250562">
        <id>Q6L8G9</id>
    </interactant>
    <interactant intactId="EBI-10172052">
        <id>P60411</id>
        <label>KRTAP10-9</label>
    </interactant>
    <organismsDiffer>false</organismsDiffer>
    <experiments>3</experiments>
</comment>
<comment type="interaction">
    <interactant intactId="EBI-10250562">
        <id>Q6L8G9</id>
    </interactant>
    <interactant intactId="EBI-1052037">
        <id>Q8IUC1</id>
        <label>KRTAP11-1</label>
    </interactant>
    <organismsDiffer>false</organismsDiffer>
    <experiments>3</experiments>
</comment>
<comment type="interaction">
    <interactant intactId="EBI-10250562">
        <id>Q6L8G9</id>
    </interactant>
    <interactant intactId="EBI-10210845">
        <id>P59990</id>
        <label>KRTAP12-1</label>
    </interactant>
    <organismsDiffer>false</organismsDiffer>
    <experiments>3</experiments>
</comment>
<comment type="interaction">
    <interactant intactId="EBI-10250562">
        <id>Q6L8G9</id>
    </interactant>
    <interactant intactId="EBI-11953334">
        <id>P60328</id>
        <label>KRTAP12-3</label>
    </interactant>
    <organismsDiffer>false</organismsDiffer>
    <experiments>3</experiments>
</comment>
<comment type="interaction">
    <interactant intactId="EBI-10250562">
        <id>Q6L8G9</id>
    </interactant>
    <interactant intactId="EBI-10241252">
        <id>Q3SY46</id>
        <label>KRTAP13-3</label>
    </interactant>
    <organismsDiffer>false</organismsDiffer>
    <experiments>3</experiments>
</comment>
<comment type="interaction">
    <interactant intactId="EBI-10250562">
        <id>Q6L8G9</id>
    </interactant>
    <interactant intactId="EBI-11988175">
        <id>Q9BYP8</id>
        <label>KRTAP17-1</label>
    </interactant>
    <organismsDiffer>false</organismsDiffer>
    <experiments>5</experiments>
</comment>
<comment type="interaction">
    <interactant intactId="EBI-10250562">
        <id>Q6L8G9</id>
    </interactant>
    <interactant intactId="EBI-3957672">
        <id>Q6PEX3</id>
        <label>KRTAP26-1</label>
    </interactant>
    <organismsDiffer>false</organismsDiffer>
    <experiments>6</experiments>
</comment>
<comment type="interaction">
    <interactant intactId="EBI-10250562">
        <id>Q6L8G9</id>
    </interactant>
    <interactant intactId="EBI-3957694">
        <id>Q9BYR6</id>
        <label>KRTAP3-3</label>
    </interactant>
    <organismsDiffer>false</organismsDiffer>
    <experiments>3</experiments>
</comment>
<comment type="interaction">
    <interactant intactId="EBI-10250562">
        <id>Q6L8G9</id>
    </interactant>
    <interactant intactId="EBI-34579671">
        <id>Q9BYQ7</id>
        <label>KRTAP4-1</label>
    </interactant>
    <organismsDiffer>false</organismsDiffer>
    <experiments>3</experiments>
</comment>
<comment type="interaction">
    <interactant intactId="EBI-10250562">
        <id>Q6L8G9</id>
    </interactant>
    <interactant intactId="EBI-10302392">
        <id>Q9BYQ6</id>
        <label>KRTAP4-11</label>
    </interactant>
    <organismsDiffer>false</organismsDiffer>
    <experiments>3</experiments>
</comment>
<comment type="interaction">
    <interactant intactId="EBI-10250562">
        <id>Q6L8G9</id>
    </interactant>
    <interactant intactId="EBI-739863">
        <id>Q9BQ66</id>
        <label>KRTAP4-12</label>
    </interactant>
    <organismsDiffer>false</organismsDiffer>
    <experiments>6</experiments>
</comment>
<comment type="interaction">
    <interactant intactId="EBI-10250562">
        <id>Q6L8G9</id>
    </interactant>
    <interactant intactId="EBI-10172511">
        <id>Q9BYR5</id>
        <label>KRTAP4-2</label>
    </interactant>
    <organismsDiffer>false</organismsDiffer>
    <experiments>8</experiments>
</comment>
<comment type="interaction">
    <interactant intactId="EBI-10250562">
        <id>Q6L8G9</id>
    </interactant>
    <interactant intactId="EBI-12074540">
        <id>Q6L8H4</id>
        <label>KRTAP5-1</label>
    </interactant>
    <organismsDiffer>false</organismsDiffer>
    <experiments>3</experiments>
</comment>
<comment type="interaction">
    <interactant intactId="EBI-10250562">
        <id>Q6L8G9</id>
    </interactant>
    <interactant intactId="EBI-11987425">
        <id>Q6L8G8</id>
        <label>KRTAP5-7</label>
    </interactant>
    <organismsDiffer>false</organismsDiffer>
    <experiments>4</experiments>
</comment>
<comment type="interaction">
    <interactant intactId="EBI-10250562">
        <id>Q6L8G9</id>
    </interactant>
    <interactant intactId="EBI-3958099">
        <id>P26371</id>
        <label>KRTAP5-9</label>
    </interactant>
    <organismsDiffer>false</organismsDiffer>
    <experiments>9</experiments>
</comment>
<comment type="interaction">
    <interactant intactId="EBI-10250562">
        <id>Q6L8G9</id>
    </interactant>
    <interactant intactId="EBI-1044640">
        <id>Q9BYQ4</id>
        <label>KRTAP9-2</label>
    </interactant>
    <organismsDiffer>false</organismsDiffer>
    <experiments>8</experiments>
</comment>
<comment type="interaction">
    <interactant intactId="EBI-10250562">
        <id>Q6L8G9</id>
    </interactant>
    <interactant intactId="EBI-1043191">
        <id>Q9BYQ3</id>
        <label>KRTAP9-3</label>
    </interactant>
    <organismsDiffer>false</organismsDiffer>
    <experiments>3</experiments>
</comment>
<comment type="interaction">
    <interactant intactId="EBI-10250562">
        <id>Q6L8G9</id>
    </interactant>
    <interactant intactId="EBI-10185730">
        <id>Q9BYQ2</id>
        <label>KRTAP9-4</label>
    </interactant>
    <organismsDiffer>false</organismsDiffer>
    <experiments>3</experiments>
</comment>
<comment type="interaction">
    <interactant intactId="EBI-10250562">
        <id>Q6L8G9</id>
    </interactant>
    <interactant intactId="EBI-11958364">
        <id>Q9BYQ0</id>
        <label>KRTAP9-8</label>
    </interactant>
    <organismsDiffer>false</organismsDiffer>
    <experiments>4</experiments>
</comment>
<comment type="interaction">
    <interactant intactId="EBI-10250562">
        <id>Q6L8G9</id>
    </interactant>
    <interactant intactId="EBI-20141748">
        <id>P52954</id>
        <label>LBX1</label>
    </interactant>
    <organismsDiffer>false</organismsDiffer>
    <experiments>3</experiments>
</comment>
<comment type="interaction">
    <interactant intactId="EBI-10250562">
        <id>Q6L8G9</id>
    </interactant>
    <interactant intactId="EBI-11962058">
        <id>Q5T7P2</id>
        <label>LCE1A</label>
    </interactant>
    <organismsDiffer>false</organismsDiffer>
    <experiments>3</experiments>
</comment>
<comment type="interaction">
    <interactant intactId="EBI-10250562">
        <id>Q6L8G9</id>
    </interactant>
    <interactant intactId="EBI-10245913">
        <id>Q5T7P3</id>
        <label>LCE1B</label>
    </interactant>
    <organismsDiffer>false</organismsDiffer>
    <experiments>5</experiments>
</comment>
<comment type="interaction">
    <interactant intactId="EBI-10250562">
        <id>Q6L8G9</id>
    </interactant>
    <interactant intactId="EBI-12224199">
        <id>Q5T751</id>
        <label>LCE1C</label>
    </interactant>
    <organismsDiffer>false</organismsDiffer>
    <experiments>3</experiments>
</comment>
<comment type="interaction">
    <interactant intactId="EBI-10250562">
        <id>Q6L8G9</id>
    </interactant>
    <interactant intactId="EBI-11741311">
        <id>Q5T752</id>
        <label>LCE1D</label>
    </interactant>
    <organismsDiffer>false</organismsDiffer>
    <experiments>6</experiments>
</comment>
<comment type="interaction">
    <interactant intactId="EBI-10250562">
        <id>Q6L8G9</id>
    </interactant>
    <interactant intactId="EBI-11955335">
        <id>Q5T753</id>
        <label>LCE1E</label>
    </interactant>
    <organismsDiffer>false</organismsDiffer>
    <experiments>3</experiments>
</comment>
<comment type="interaction">
    <interactant intactId="EBI-10250562">
        <id>Q6L8G9</id>
    </interactant>
    <interactant intactId="EBI-11958008">
        <id>Q5T754</id>
        <label>LCE1F</label>
    </interactant>
    <organismsDiffer>false</organismsDiffer>
    <experiments>3</experiments>
</comment>
<comment type="interaction">
    <interactant intactId="EBI-10250562">
        <id>Q6L8G9</id>
    </interactant>
    <interactant intactId="EBI-10246607">
        <id>Q5TA79</id>
        <label>LCE2A</label>
    </interactant>
    <organismsDiffer>false</organismsDiffer>
    <experiments>3</experiments>
</comment>
<comment type="interaction">
    <interactant intactId="EBI-10250562">
        <id>Q6L8G9</id>
    </interactant>
    <interactant intactId="EBI-11973993">
        <id>Q5TA81</id>
        <label>LCE2C</label>
    </interactant>
    <organismsDiffer>false</organismsDiffer>
    <experiments>6</experiments>
</comment>
<comment type="interaction">
    <interactant intactId="EBI-10250562">
        <id>Q6L8G9</id>
    </interactant>
    <interactant intactId="EBI-10246750">
        <id>Q5TA82</id>
        <label>LCE2D</label>
    </interactant>
    <organismsDiffer>false</organismsDiffer>
    <experiments>3</experiments>
</comment>
<comment type="interaction">
    <interactant intactId="EBI-10250562">
        <id>Q6L8G9</id>
    </interactant>
    <interactant intactId="EBI-9394625">
        <id>Q5TA76</id>
        <label>LCE3A</label>
    </interactant>
    <organismsDiffer>false</organismsDiffer>
    <experiments>6</experiments>
</comment>
<comment type="interaction">
    <interactant intactId="EBI-10250562">
        <id>Q6L8G9</id>
    </interactant>
    <interactant intactId="EBI-11974495">
        <id>Q5TA77</id>
        <label>LCE3B</label>
    </interactant>
    <organismsDiffer>false</organismsDiffer>
    <experiments>3</experiments>
</comment>
<comment type="interaction">
    <interactant intactId="EBI-10250562">
        <id>Q6L8G9</id>
    </interactant>
    <interactant intactId="EBI-10245291">
        <id>Q5T5A8</id>
        <label>LCE3C</label>
    </interactant>
    <organismsDiffer>false</organismsDiffer>
    <experiments>3</experiments>
</comment>
<comment type="interaction">
    <interactant intactId="EBI-10250562">
        <id>Q6L8G9</id>
    </interactant>
    <interactant intactId="EBI-6658837">
        <id>Q9BYE3</id>
        <label>LCE3D</label>
    </interactant>
    <organismsDiffer>false</organismsDiffer>
    <experiments>3</experiments>
</comment>
<comment type="interaction">
    <interactant intactId="EBI-10250562">
        <id>Q6L8G9</id>
    </interactant>
    <interactant intactId="EBI-10245456">
        <id>Q5T5B0</id>
        <label>LCE3E</label>
    </interactant>
    <organismsDiffer>false</organismsDiffer>
    <experiments>3</experiments>
</comment>
<comment type="interaction">
    <interactant intactId="EBI-10250562">
        <id>Q6L8G9</id>
    </interactant>
    <interactant intactId="EBI-10246358">
        <id>Q5TA78</id>
        <label>LCE4A</label>
    </interactant>
    <organismsDiffer>false</organismsDiffer>
    <experiments>3</experiments>
</comment>
<comment type="interaction">
    <interactant intactId="EBI-10250562">
        <id>Q6L8G9</id>
    </interactant>
    <interactant intactId="EBI-11955689">
        <id>Q5TCM9</id>
        <label>LCE5A</label>
    </interactant>
    <organismsDiffer>false</organismsDiffer>
    <experiments>5</experiments>
</comment>
<comment type="interaction">
    <interactant intactId="EBI-10250562">
        <id>Q6L8G9</id>
    </interactant>
    <interactant intactId="EBI-18115868">
        <id>Q5T871</id>
        <label>LELP1</label>
    </interactant>
    <organismsDiffer>false</organismsDiffer>
    <experiments>3</experiments>
</comment>
<comment type="interaction">
    <interactant intactId="EBI-10250562">
        <id>Q6L8G9</id>
    </interactant>
    <interactant intactId="EBI-719955">
        <id>Q96FE5</id>
        <label>LINGO1</label>
    </interactant>
    <organismsDiffer>false</organismsDiffer>
    <experiments>3</experiments>
</comment>
<comment type="interaction">
    <interactant intactId="EBI-10250562">
        <id>Q6L8G9</id>
    </interactant>
    <interactant intactId="EBI-12028858">
        <id>Q8IXW0</id>
        <label>LMNTD2</label>
    </interactant>
    <organismsDiffer>false</organismsDiffer>
    <experiments>3</experiments>
</comment>
<comment type="interaction">
    <interactant intactId="EBI-10250562">
        <id>Q6L8G9</id>
    </interactant>
    <interactant intactId="EBI-947402">
        <id>O60336</id>
        <label>MAPKBP1</label>
    </interactant>
    <organismsDiffer>false</organismsDiffer>
    <experiments>3</experiments>
</comment>
<comment type="interaction">
    <interactant intactId="EBI-10250562">
        <id>Q6L8G9</id>
    </interactant>
    <interactant intactId="EBI-748397">
        <id>P50222</id>
        <label>MEOX2</label>
    </interactant>
    <organismsDiffer>false</organismsDiffer>
    <experiments>3</experiments>
</comment>
<comment type="interaction">
    <interactant intactId="EBI-10250562">
        <id>Q6L8G9</id>
    </interactant>
    <interactant intactId="EBI-16439278">
        <id>Q6FHY5</id>
        <label>MEOX2</label>
    </interactant>
    <organismsDiffer>false</organismsDiffer>
    <experiments>3</experiments>
</comment>
<comment type="interaction">
    <interactant intactId="EBI-10250562">
        <id>Q6L8G9</id>
    </interactant>
    <interactant intactId="EBI-2858213">
        <id>Q86VE0</id>
        <label>MYPOP</label>
    </interactant>
    <organismsDiffer>false</organismsDiffer>
    <experiments>3</experiments>
</comment>
<comment type="interaction">
    <interactant intactId="EBI-10250562">
        <id>Q6L8G9</id>
    </interactant>
    <interactant intactId="EBI-366978">
        <id>Q9UBE8</id>
        <label>NLK</label>
    </interactant>
    <organismsDiffer>false</organismsDiffer>
    <experiments>3</experiments>
</comment>
<comment type="interaction">
    <interactant intactId="EBI-10250562">
        <id>Q6L8G9</id>
    </interactant>
    <interactant intactId="EBI-945833">
        <id>Q7Z3S9</id>
        <label>NOTCH2NLA</label>
    </interactant>
    <organismsDiffer>false</organismsDiffer>
    <experiments>4</experiments>
</comment>
<comment type="interaction">
    <interactant intactId="EBI-10250562">
        <id>Q6L8G9</id>
    </interactant>
    <interactant intactId="EBI-22310682">
        <id>P0DPK4</id>
        <label>NOTCH2NLC</label>
    </interactant>
    <organismsDiffer>false</organismsDiffer>
    <experiments>3</experiments>
</comment>
<comment type="interaction">
    <interactant intactId="EBI-10250562">
        <id>Q6L8G9</id>
    </interactant>
    <interactant intactId="EBI-17490746">
        <id>A8MTQ0</id>
        <label>NOTO</label>
    </interactant>
    <organismsDiffer>false</organismsDiffer>
    <experiments>3</experiments>
</comment>
<comment type="interaction">
    <interactant intactId="EBI-10250562">
        <id>Q6L8G9</id>
    </interactant>
    <interactant intactId="EBI-10250949">
        <id>Q6NSM0</id>
        <label>NR1D2</label>
    </interactant>
    <organismsDiffer>false</organismsDiffer>
    <experiments>3</experiments>
</comment>
<comment type="interaction">
    <interactant intactId="EBI-10250562">
        <id>Q6L8G9</id>
    </interactant>
    <interactant intactId="EBI-13644623">
        <id>Q92570</id>
        <label>NR4A3</label>
    </interactant>
    <organismsDiffer>false</organismsDiffer>
    <experiments>3</experiments>
</comment>
<comment type="interaction">
    <interactant intactId="EBI-10250562">
        <id>Q6L8G9</id>
    </interactant>
    <interactant intactId="EBI-1210753">
        <id>Q7Z417</id>
        <label>NUFIP2</label>
    </interactant>
    <organismsDiffer>false</organismsDiffer>
    <experiments>6</experiments>
</comment>
<comment type="interaction">
    <interactant intactId="EBI-10250562">
        <id>Q6L8G9</id>
    </interactant>
    <interactant intactId="EBI-740446">
        <id>P32242</id>
        <label>OTX1</label>
    </interactant>
    <organismsDiffer>false</organismsDiffer>
    <experiments>6</experiments>
</comment>
<comment type="interaction">
    <interactant intactId="EBI-10250562">
        <id>Q6L8G9</id>
    </interactant>
    <interactant intactId="EBI-12813389">
        <id>Q8TDS5</id>
        <label>OXER1</label>
    </interactant>
    <organismsDiffer>false</organismsDiffer>
    <experiments>3</experiments>
</comment>
<comment type="interaction">
    <interactant intactId="EBI-10250562">
        <id>Q6L8G9</id>
    </interactant>
    <interactant intactId="EBI-740019">
        <id>O15162</id>
        <label>PLSCR1</label>
    </interactant>
    <organismsDiffer>false</organismsDiffer>
    <experiments>3</experiments>
</comment>
<comment type="interaction">
    <interactant intactId="EBI-10250562">
        <id>Q6L8G9</id>
    </interactant>
    <interactant intactId="EBI-17236143">
        <id>Q12837</id>
        <label>POU4F2</label>
    </interactant>
    <organismsDiffer>false</organismsDiffer>
    <experiments>3</experiments>
</comment>
<comment type="interaction">
    <interactant intactId="EBI-10250562">
        <id>Q6L8G9</id>
    </interactant>
    <interactant intactId="EBI-3918154">
        <id>Q9UGC6</id>
        <label>RGS17</label>
    </interactant>
    <organismsDiffer>false</organismsDiffer>
    <experiments>3</experiments>
</comment>
<comment type="interaction">
    <interactant intactId="EBI-10250562">
        <id>Q6L8G9</id>
    </interactant>
    <interactant intactId="EBI-874907">
        <id>P49795</id>
        <label>RGS19</label>
    </interactant>
    <organismsDiffer>false</organismsDiffer>
    <experiments>3</experiments>
</comment>
<comment type="interaction">
    <interactant intactId="EBI-10250562">
        <id>Q6L8G9</id>
    </interactant>
    <interactant intactId="EBI-10178530">
        <id>O76081-6</id>
        <label>RGS20</label>
    </interactant>
    <organismsDiffer>false</organismsDiffer>
    <experiments>6</experiments>
</comment>
<comment type="interaction">
    <interactant intactId="EBI-10250562">
        <id>Q6L8G9</id>
    </interactant>
    <interactant intactId="EBI-750494">
        <id>P49901</id>
        <label>SMCP</label>
    </interactant>
    <organismsDiffer>false</organismsDiffer>
    <experiments>8</experiments>
</comment>
<comment type="interaction">
    <interactant intactId="EBI-10250562">
        <id>Q6L8G9</id>
    </interactant>
    <interactant intactId="EBI-742487">
        <id>O43597</id>
        <label>SPRY2</label>
    </interactant>
    <organismsDiffer>false</organismsDiffer>
    <experiments>3</experiments>
</comment>
<comment type="interaction">
    <interactant intactId="EBI-10250562">
        <id>Q6L8G9</id>
    </interactant>
    <interactant intactId="EBI-11957216">
        <id>A8MV65-2</id>
        <label>VGLL3</label>
    </interactant>
    <organismsDiffer>false</organismsDiffer>
    <experiments>3</experiments>
</comment>
<comment type="interaction">
    <interactant intactId="EBI-10250562">
        <id>Q6L8G9</id>
    </interactant>
    <interactant intactId="EBI-765538">
        <id>P25490</id>
        <label>YY1</label>
    </interactant>
    <organismsDiffer>false</organismsDiffer>
    <experiments>3</experiments>
</comment>
<comment type="tissue specificity">
    <text evidence="1">Expressed in hair root and not in skin. Expressed also in liver and skeletal muscle.</text>
</comment>
<comment type="similarity">
    <text evidence="2">Belongs to the KRTAP type 5 family.</text>
</comment>
<gene>
    <name type="primary">KRTAP5-6</name>
    <name type="synonym">KAP5.6</name>
    <name type="synonym">KRTAP5.6</name>
</gene>
<organism>
    <name type="scientific">Homo sapiens</name>
    <name type="common">Human</name>
    <dbReference type="NCBI Taxonomy" id="9606"/>
    <lineage>
        <taxon>Eukaryota</taxon>
        <taxon>Metazoa</taxon>
        <taxon>Chordata</taxon>
        <taxon>Craniata</taxon>
        <taxon>Vertebrata</taxon>
        <taxon>Euteleostomi</taxon>
        <taxon>Mammalia</taxon>
        <taxon>Eutheria</taxon>
        <taxon>Euarchontoglires</taxon>
        <taxon>Primates</taxon>
        <taxon>Haplorrhini</taxon>
        <taxon>Catarrhini</taxon>
        <taxon>Hominidae</taxon>
        <taxon>Homo</taxon>
    </lineage>
</organism>
<protein>
    <recommendedName>
        <fullName>Keratin-associated protein 5-6</fullName>
    </recommendedName>
    <alternativeName>
        <fullName>Keratin-associated protein 5.6</fullName>
    </alternativeName>
    <alternativeName>
        <fullName>Ultrahigh sulfur keratin-associated protein 5.6</fullName>
    </alternativeName>
</protein>
<accession>Q6L8G9</accession>
<accession>A1L452</accession>
<evidence type="ECO:0000269" key="1">
    <source>
    </source>
</evidence>
<evidence type="ECO:0000305" key="2"/>
<sequence>MGCCGCSGGCGSGCGGCGSGCGGCGSSCCVPICCCKPVCCCVPACSCTSCGSCGGSKGCCGSCGGSKGGCGSCGGSKGGCGSCGCSQCSCCKPCYCSSGCGSSCCQSSCCKPCCSQASCCVPICCQCKI</sequence>
<feature type="chain" id="PRO_0000184104" description="Keratin-associated protein 5-6">
    <location>
        <begin position="1"/>
        <end position="129"/>
    </location>
</feature>
<feature type="repeat" description="1">
    <location>
        <begin position="28"/>
        <end position="31"/>
    </location>
</feature>
<feature type="repeat" description="2">
    <location>
        <begin position="34"/>
        <end position="37"/>
    </location>
</feature>
<feature type="repeat" description="3">
    <location>
        <begin position="40"/>
        <end position="43"/>
    </location>
</feature>
<feature type="repeat" description="4">
    <location>
        <begin position="90"/>
        <end position="93"/>
    </location>
</feature>
<feature type="repeat" description="5">
    <location>
        <begin position="109"/>
        <end position="112"/>
    </location>
</feature>
<feature type="repeat" description="6">
    <location>
        <begin position="119"/>
        <end position="122"/>
    </location>
</feature>
<feature type="region of interest" description="6 X 4 AA repeats of C-C-X-P">
    <location>
        <begin position="28"/>
        <end position="112"/>
    </location>
</feature>
<feature type="sequence variant" id="VAR_062155" description="In dbSNP:rs58645950.">
    <original>C</original>
    <variation>F</variation>
    <location>
        <position position="6"/>
    </location>
</feature>